<evidence type="ECO:0000250" key="1"/>
<evidence type="ECO:0000255" key="2">
    <source>
        <dbReference type="PROSITE-ProRule" id="PRU00441"/>
    </source>
</evidence>
<evidence type="ECO:0000305" key="3"/>
<feature type="chain" id="PRO_0000059991" description="Sulfate transport system permease protein CysT">
    <location>
        <begin position="1"/>
        <end position="278"/>
    </location>
</feature>
<feature type="transmembrane region" description="Helical" evidence="2">
    <location>
        <begin position="22"/>
        <end position="42"/>
    </location>
</feature>
<feature type="transmembrane region" description="Helical" evidence="2">
    <location>
        <begin position="67"/>
        <end position="87"/>
    </location>
</feature>
<feature type="transmembrane region" description="Helical" evidence="2">
    <location>
        <begin position="102"/>
        <end position="122"/>
    </location>
</feature>
<feature type="transmembrane region" description="Helical" evidence="2">
    <location>
        <begin position="139"/>
        <end position="159"/>
    </location>
</feature>
<feature type="transmembrane region" description="Helical" evidence="2">
    <location>
        <begin position="188"/>
        <end position="208"/>
    </location>
</feature>
<feature type="transmembrane region" description="Helical" evidence="2">
    <location>
        <begin position="217"/>
        <end position="237"/>
    </location>
</feature>
<feature type="transmembrane region" description="Helical" evidence="2">
    <location>
        <begin position="246"/>
        <end position="266"/>
    </location>
</feature>
<feature type="domain" description="ABC transmembrane type-1" evidence="2">
    <location>
        <begin position="63"/>
        <end position="266"/>
    </location>
</feature>
<comment type="function">
    <text evidence="1">Part of the ABC transporter complex CysAWTP (TC 3.A.1.6.1) involved in sulfate/thiosulfate import. Probably responsible for the translocation of the substrate across the membrane (By similarity).</text>
</comment>
<comment type="subunit">
    <text evidence="3">The complex is composed of two ATP-binding proteins (CysA), two transmembrane proteins (CysT and CysW) and a solute-binding protein (CysP).</text>
</comment>
<comment type="subcellular location">
    <subcellularLocation>
        <location>Cell inner membrane</location>
        <topology>Multi-pass membrane protein</topology>
    </subcellularLocation>
</comment>
<comment type="induction">
    <text>By sulfur deprivation.</text>
</comment>
<comment type="similarity">
    <text evidence="3">Belongs to the binding-protein-dependent transport system permease family. CysTW subfamily.</text>
</comment>
<gene>
    <name type="primary">cysT</name>
    <name type="ordered locus">Synpcc7942_1682</name>
</gene>
<name>CYST_SYNE7</name>
<organism>
    <name type="scientific">Synechococcus elongatus (strain ATCC 33912 / PCC 7942 / FACHB-805)</name>
    <name type="common">Anacystis nidulans R2</name>
    <dbReference type="NCBI Taxonomy" id="1140"/>
    <lineage>
        <taxon>Bacteria</taxon>
        <taxon>Bacillati</taxon>
        <taxon>Cyanobacteriota</taxon>
        <taxon>Cyanophyceae</taxon>
        <taxon>Synechococcales</taxon>
        <taxon>Synechococcaceae</taxon>
        <taxon>Synechococcus</taxon>
    </lineage>
</organism>
<reference key="1">
    <citation type="journal article" date="1991" name="J. Bacteriol.">
        <title>Characterization and mutagenesis of sulfur-regulated genes in a cyanobacterium: evidence for function in sulfate transport.</title>
        <authorList>
            <person name="Laudenbach D.E."/>
            <person name="Grossman A.R."/>
        </authorList>
    </citation>
    <scope>NUCLEOTIDE SEQUENCE [GENOMIC DNA]</scope>
</reference>
<reference key="2">
    <citation type="submission" date="2005-08" db="EMBL/GenBank/DDBJ databases">
        <title>Complete sequence of chromosome 1 of Synechococcus elongatus PCC 7942.</title>
        <authorList>
            <consortium name="US DOE Joint Genome Institute"/>
            <person name="Copeland A."/>
            <person name="Lucas S."/>
            <person name="Lapidus A."/>
            <person name="Barry K."/>
            <person name="Detter J.C."/>
            <person name="Glavina T."/>
            <person name="Hammon N."/>
            <person name="Israni S."/>
            <person name="Pitluck S."/>
            <person name="Schmutz J."/>
            <person name="Larimer F."/>
            <person name="Land M."/>
            <person name="Kyrpides N."/>
            <person name="Lykidis A."/>
            <person name="Golden S."/>
            <person name="Richardson P."/>
        </authorList>
    </citation>
    <scope>NUCLEOTIDE SEQUENCE [LARGE SCALE GENOMIC DNA]</scope>
    <source>
        <strain>ATCC 33912 / PCC 7942 / FACHB-805</strain>
    </source>
</reference>
<keyword id="KW-0997">Cell inner membrane</keyword>
<keyword id="KW-1003">Cell membrane</keyword>
<keyword id="KW-0472">Membrane</keyword>
<keyword id="KW-1185">Reference proteome</keyword>
<keyword id="KW-0346">Stress response</keyword>
<keyword id="KW-0764">Sulfate transport</keyword>
<keyword id="KW-0812">Transmembrane</keyword>
<keyword id="KW-1133">Transmembrane helix</keyword>
<keyword id="KW-0813">Transport</keyword>
<proteinExistence type="evidence at transcript level"/>
<dbReference type="EMBL" id="M65247">
    <property type="protein sequence ID" value="AAA73044.1"/>
    <property type="molecule type" value="Genomic_DNA"/>
</dbReference>
<dbReference type="EMBL" id="CP000100">
    <property type="protein sequence ID" value="ABB57712.1"/>
    <property type="molecule type" value="Genomic_DNA"/>
</dbReference>
<dbReference type="RefSeq" id="WP_011378140.1">
    <property type="nucleotide sequence ID" value="NZ_JACJTX010000001.1"/>
</dbReference>
<dbReference type="SMR" id="P27367"/>
<dbReference type="STRING" id="1140.Synpcc7942_1682"/>
<dbReference type="PaxDb" id="1140-Synpcc7942_1682"/>
<dbReference type="GeneID" id="72430552"/>
<dbReference type="KEGG" id="syf:Synpcc7942_1682"/>
<dbReference type="eggNOG" id="COG0555">
    <property type="taxonomic scope" value="Bacteria"/>
</dbReference>
<dbReference type="HOGENOM" id="CLU_016047_14_0_3"/>
<dbReference type="OrthoDB" id="9774448at2"/>
<dbReference type="BioCyc" id="SYNEL:SYNPCC7942_1682-MONOMER"/>
<dbReference type="Proteomes" id="UP000889800">
    <property type="component" value="Chromosome"/>
</dbReference>
<dbReference type="GO" id="GO:0005886">
    <property type="term" value="C:plasma membrane"/>
    <property type="evidence" value="ECO:0007669"/>
    <property type="project" value="UniProtKB-SubCell"/>
</dbReference>
<dbReference type="GO" id="GO:0015419">
    <property type="term" value="F:ABC-type sulfate transporter activity"/>
    <property type="evidence" value="ECO:0007669"/>
    <property type="project" value="InterPro"/>
</dbReference>
<dbReference type="CDD" id="cd06261">
    <property type="entry name" value="TM_PBP2"/>
    <property type="match status" value="1"/>
</dbReference>
<dbReference type="FunFam" id="1.10.3720.10:FF:000004">
    <property type="entry name" value="Sulfate transport system permease protein CysT"/>
    <property type="match status" value="1"/>
</dbReference>
<dbReference type="Gene3D" id="1.10.3720.10">
    <property type="entry name" value="MetI-like"/>
    <property type="match status" value="1"/>
</dbReference>
<dbReference type="InterPro" id="IPR011865">
    <property type="entry name" value="CysT_permease"/>
</dbReference>
<dbReference type="InterPro" id="IPR000515">
    <property type="entry name" value="MetI-like"/>
</dbReference>
<dbReference type="InterPro" id="IPR035906">
    <property type="entry name" value="MetI-like_sf"/>
</dbReference>
<dbReference type="InterPro" id="IPR005667">
    <property type="entry name" value="Sulph_transpt2"/>
</dbReference>
<dbReference type="NCBIfam" id="TIGR00969">
    <property type="entry name" value="3a0106s02"/>
    <property type="match status" value="1"/>
</dbReference>
<dbReference type="NCBIfam" id="TIGR02139">
    <property type="entry name" value="permease_CysT"/>
    <property type="match status" value="1"/>
</dbReference>
<dbReference type="PANTHER" id="PTHR30406">
    <property type="entry name" value="SULFATE TRANSPORT SYSTEM PERMEASE PROTEIN"/>
    <property type="match status" value="1"/>
</dbReference>
<dbReference type="PANTHER" id="PTHR30406:SF8">
    <property type="entry name" value="SULFATE TRANSPORT SYSTEM PERMEASE PROTEIN CYST"/>
    <property type="match status" value="1"/>
</dbReference>
<dbReference type="Pfam" id="PF00528">
    <property type="entry name" value="BPD_transp_1"/>
    <property type="match status" value="1"/>
</dbReference>
<dbReference type="SUPFAM" id="SSF161098">
    <property type="entry name" value="MetI-like"/>
    <property type="match status" value="1"/>
</dbReference>
<dbReference type="PROSITE" id="PS50928">
    <property type="entry name" value="ABC_TM1"/>
    <property type="match status" value="1"/>
</dbReference>
<accession>P27367</accession>
<accession>Q31MK7</accession>
<protein>
    <recommendedName>
        <fullName>Sulfate transport system permease protein CysT</fullName>
    </recommendedName>
</protein>
<sequence>MSLRLPSLSFTWLTRLSWSWRFTWVYLTLILFIPIIALFLKSASLPLGRIWELATQPVAVAAYEVTFGLSLAAAALNGVFGVIIAWVLTRYDFPGKKLFDSFIDLPFALPTAVAGLTLATVYSDKGWIGQFIAPFGVQIAFTRWGVLLAMVFISLPFVVRTVEPLLLELEVEAEEAAASLGASPSETFWRVILPPILPGVLAGVAQGFSRAVGEFGSVVIISGNLPFDDLIAPVLIFERLEQYDYAGATVIGSVLLLFSLVILFVINALQNWSSRYNG</sequence>